<comment type="function">
    <text evidence="1">Catalyzes the reversible isomerization-deamination of glucosamine 6-phosphate (GlcN6P) to form fructose 6-phosphate (Fru6P) and ammonium ion.</text>
</comment>
<comment type="catalytic activity">
    <reaction evidence="1">
        <text>alpha-D-glucosamine 6-phosphate + H2O = beta-D-fructose 6-phosphate + NH4(+)</text>
        <dbReference type="Rhea" id="RHEA:12172"/>
        <dbReference type="ChEBI" id="CHEBI:15377"/>
        <dbReference type="ChEBI" id="CHEBI:28938"/>
        <dbReference type="ChEBI" id="CHEBI:57634"/>
        <dbReference type="ChEBI" id="CHEBI:75989"/>
        <dbReference type="EC" id="3.5.99.6"/>
    </reaction>
</comment>
<comment type="pathway">
    <text evidence="1">Amino-sugar metabolism; N-acetylneuraminate degradation; D-fructose 6-phosphate from N-acetylneuraminate: step 5/5.</text>
</comment>
<comment type="similarity">
    <text evidence="1">Belongs to the glucosamine/galactosamine-6-phosphate isomerase family. NagB subfamily.</text>
</comment>
<protein>
    <recommendedName>
        <fullName evidence="1">Glucosamine-6-phosphate deaminase</fullName>
        <ecNumber evidence="1">3.5.99.6</ecNumber>
    </recommendedName>
    <alternativeName>
        <fullName evidence="1">GlcN6P deaminase</fullName>
        <shortName evidence="1">GNPDA</shortName>
    </alternativeName>
    <alternativeName>
        <fullName evidence="1">Glucosamine-6-phosphate isomerase</fullName>
    </alternativeName>
</protein>
<evidence type="ECO:0000255" key="1">
    <source>
        <dbReference type="HAMAP-Rule" id="MF_01241"/>
    </source>
</evidence>
<keyword id="KW-0119">Carbohydrate metabolism</keyword>
<keyword id="KW-0378">Hydrolase</keyword>
<keyword id="KW-1185">Reference proteome</keyword>
<proteinExistence type="inferred from homology"/>
<gene>
    <name evidence="1" type="primary">nagB</name>
    <name type="ordered locus">cauri_0238</name>
</gene>
<sequence>MEILIRSTPADVAVAAADILASYANTSATLGLATGSTPVATYKELIARHERGEVSFAGSRAFLLDEYLGLAPEHEQSYYATIRRDFTSHVDFDDALVKSPEGSAADPVAATAAYDQAIRNAGGIDVQLLGIGANGHIGFNEPSSSLTSRTRVVALHPQTVQDNSRFFDNLEEVPRHALTQGLGTISEARHLLLIATGTNKANAVQAMVEGPLSARCPGSVLQLHPRATVIVDEAAAALLEDREYYLFADQNRLH</sequence>
<name>NAGB_CORA7</name>
<feature type="chain" id="PRO_1000165016" description="Glucosamine-6-phosphate deaminase">
    <location>
        <begin position="1"/>
        <end position="254"/>
    </location>
</feature>
<feature type="active site" description="Proton acceptor; for enolization step" evidence="1">
    <location>
        <position position="65"/>
    </location>
</feature>
<feature type="active site" description="For ring-opening step" evidence="1">
    <location>
        <position position="134"/>
    </location>
</feature>
<feature type="active site" description="Proton acceptor; for ring-opening step" evidence="1">
    <location>
        <position position="136"/>
    </location>
</feature>
<feature type="active site" description="For ring-opening step" evidence="1">
    <location>
        <position position="141"/>
    </location>
</feature>
<reference key="1">
    <citation type="journal article" date="2010" name="BMC Genomics">
        <title>Complete genome sequence and lifestyle of black-pigmented Corynebacterium aurimucosum ATCC 700975 (formerly C. nigricans CN-1) isolated from a vaginal swab of a woman with spontaneous abortion.</title>
        <authorList>
            <person name="Trost E."/>
            <person name="Gotker S."/>
            <person name="Schneider J."/>
            <person name="Schneiker-Bekel S."/>
            <person name="Szczepanowski R."/>
            <person name="Tilker A."/>
            <person name="Viehoever P."/>
            <person name="Arnold W."/>
            <person name="Bekel T."/>
            <person name="Blom J."/>
            <person name="Gartemann K.H."/>
            <person name="Linke B."/>
            <person name="Goesmann A."/>
            <person name="Puhler A."/>
            <person name="Shukla S.K."/>
            <person name="Tauch A."/>
        </authorList>
    </citation>
    <scope>NUCLEOTIDE SEQUENCE [LARGE SCALE GENOMIC DNA]</scope>
    <source>
        <strain>ATCC 700975 / DSM 44827 / CIP 107346 / CN-1</strain>
    </source>
</reference>
<accession>C3PJW6</accession>
<organism>
    <name type="scientific">Corynebacterium aurimucosum (strain ATCC 700975 / DSM 44827 / CIP 107346 / CN-1)</name>
    <name type="common">Corynebacterium nigricans</name>
    <dbReference type="NCBI Taxonomy" id="548476"/>
    <lineage>
        <taxon>Bacteria</taxon>
        <taxon>Bacillati</taxon>
        <taxon>Actinomycetota</taxon>
        <taxon>Actinomycetes</taxon>
        <taxon>Mycobacteriales</taxon>
        <taxon>Corynebacteriaceae</taxon>
        <taxon>Corynebacterium</taxon>
    </lineage>
</organism>
<dbReference type="EC" id="3.5.99.6" evidence="1"/>
<dbReference type="EMBL" id="CP001601">
    <property type="protein sequence ID" value="ACP31837.1"/>
    <property type="molecule type" value="Genomic_DNA"/>
</dbReference>
<dbReference type="RefSeq" id="WP_010189902.1">
    <property type="nucleotide sequence ID" value="NC_012590.1"/>
</dbReference>
<dbReference type="SMR" id="C3PJW6"/>
<dbReference type="STRING" id="548476.cauri_0238"/>
<dbReference type="GeneID" id="31922861"/>
<dbReference type="KEGG" id="car:cauri_0238"/>
<dbReference type="eggNOG" id="COG0363">
    <property type="taxonomic scope" value="Bacteria"/>
</dbReference>
<dbReference type="HOGENOM" id="CLU_049611_1_1_11"/>
<dbReference type="OrthoDB" id="9791139at2"/>
<dbReference type="UniPathway" id="UPA00629">
    <property type="reaction ID" value="UER00684"/>
</dbReference>
<dbReference type="Proteomes" id="UP000002077">
    <property type="component" value="Chromosome"/>
</dbReference>
<dbReference type="GO" id="GO:0005737">
    <property type="term" value="C:cytoplasm"/>
    <property type="evidence" value="ECO:0007669"/>
    <property type="project" value="TreeGrafter"/>
</dbReference>
<dbReference type="GO" id="GO:0004342">
    <property type="term" value="F:glucosamine-6-phosphate deaminase activity"/>
    <property type="evidence" value="ECO:0007669"/>
    <property type="project" value="UniProtKB-UniRule"/>
</dbReference>
<dbReference type="GO" id="GO:0042802">
    <property type="term" value="F:identical protein binding"/>
    <property type="evidence" value="ECO:0007669"/>
    <property type="project" value="TreeGrafter"/>
</dbReference>
<dbReference type="GO" id="GO:0005975">
    <property type="term" value="P:carbohydrate metabolic process"/>
    <property type="evidence" value="ECO:0007669"/>
    <property type="project" value="InterPro"/>
</dbReference>
<dbReference type="GO" id="GO:0006043">
    <property type="term" value="P:glucosamine catabolic process"/>
    <property type="evidence" value="ECO:0007669"/>
    <property type="project" value="TreeGrafter"/>
</dbReference>
<dbReference type="GO" id="GO:0006046">
    <property type="term" value="P:N-acetylglucosamine catabolic process"/>
    <property type="evidence" value="ECO:0007669"/>
    <property type="project" value="TreeGrafter"/>
</dbReference>
<dbReference type="GO" id="GO:0019262">
    <property type="term" value="P:N-acetylneuraminate catabolic process"/>
    <property type="evidence" value="ECO:0007669"/>
    <property type="project" value="UniProtKB-UniRule"/>
</dbReference>
<dbReference type="CDD" id="cd01399">
    <property type="entry name" value="GlcN6P_deaminase"/>
    <property type="match status" value="1"/>
</dbReference>
<dbReference type="Gene3D" id="3.40.50.1360">
    <property type="match status" value="1"/>
</dbReference>
<dbReference type="HAMAP" id="MF_01241">
    <property type="entry name" value="GlcN6P_deamin"/>
    <property type="match status" value="1"/>
</dbReference>
<dbReference type="InterPro" id="IPR006148">
    <property type="entry name" value="Glc/Gal-6P_isomerase"/>
</dbReference>
<dbReference type="InterPro" id="IPR004547">
    <property type="entry name" value="Glucosamine6P_isomerase"/>
</dbReference>
<dbReference type="InterPro" id="IPR018321">
    <property type="entry name" value="Glucosamine6P_isomerase_CS"/>
</dbReference>
<dbReference type="InterPro" id="IPR037171">
    <property type="entry name" value="NagB/RpiA_transferase-like"/>
</dbReference>
<dbReference type="NCBIfam" id="TIGR00502">
    <property type="entry name" value="nagB"/>
    <property type="match status" value="1"/>
</dbReference>
<dbReference type="PANTHER" id="PTHR11280">
    <property type="entry name" value="GLUCOSAMINE-6-PHOSPHATE ISOMERASE"/>
    <property type="match status" value="1"/>
</dbReference>
<dbReference type="PANTHER" id="PTHR11280:SF5">
    <property type="entry name" value="GLUCOSAMINE-6-PHOSPHATE ISOMERASE"/>
    <property type="match status" value="1"/>
</dbReference>
<dbReference type="Pfam" id="PF01182">
    <property type="entry name" value="Glucosamine_iso"/>
    <property type="match status" value="1"/>
</dbReference>
<dbReference type="SUPFAM" id="SSF100950">
    <property type="entry name" value="NagB/RpiA/CoA transferase-like"/>
    <property type="match status" value="1"/>
</dbReference>
<dbReference type="PROSITE" id="PS01161">
    <property type="entry name" value="GLC_GALNAC_ISOMERASE"/>
    <property type="match status" value="1"/>
</dbReference>